<comment type="function">
    <text evidence="1">Binds to the 23S rRNA.</text>
</comment>
<comment type="subunit">
    <text evidence="1">Part of the 50S ribosomal subunit.</text>
</comment>
<comment type="similarity">
    <text evidence="1">Belongs to the universal ribosomal protein uL15 family.</text>
</comment>
<dbReference type="EMBL" id="CP001101">
    <property type="protein sequence ID" value="ACE05181.1"/>
    <property type="molecule type" value="Genomic_DNA"/>
</dbReference>
<dbReference type="SMR" id="B3EP42"/>
<dbReference type="STRING" id="331678.Cphamn1_2277"/>
<dbReference type="KEGG" id="cpb:Cphamn1_2277"/>
<dbReference type="eggNOG" id="COG0200">
    <property type="taxonomic scope" value="Bacteria"/>
</dbReference>
<dbReference type="HOGENOM" id="CLU_055188_4_0_10"/>
<dbReference type="OrthoDB" id="9810293at2"/>
<dbReference type="GO" id="GO:0022625">
    <property type="term" value="C:cytosolic large ribosomal subunit"/>
    <property type="evidence" value="ECO:0007669"/>
    <property type="project" value="TreeGrafter"/>
</dbReference>
<dbReference type="GO" id="GO:0019843">
    <property type="term" value="F:rRNA binding"/>
    <property type="evidence" value="ECO:0007669"/>
    <property type="project" value="UniProtKB-UniRule"/>
</dbReference>
<dbReference type="GO" id="GO:0003735">
    <property type="term" value="F:structural constituent of ribosome"/>
    <property type="evidence" value="ECO:0007669"/>
    <property type="project" value="InterPro"/>
</dbReference>
<dbReference type="GO" id="GO:0006412">
    <property type="term" value="P:translation"/>
    <property type="evidence" value="ECO:0007669"/>
    <property type="project" value="UniProtKB-UniRule"/>
</dbReference>
<dbReference type="Gene3D" id="3.100.10.10">
    <property type="match status" value="1"/>
</dbReference>
<dbReference type="HAMAP" id="MF_01341">
    <property type="entry name" value="Ribosomal_uL15"/>
    <property type="match status" value="1"/>
</dbReference>
<dbReference type="InterPro" id="IPR030878">
    <property type="entry name" value="Ribosomal_uL15"/>
</dbReference>
<dbReference type="InterPro" id="IPR021131">
    <property type="entry name" value="Ribosomal_uL15/eL18"/>
</dbReference>
<dbReference type="InterPro" id="IPR036227">
    <property type="entry name" value="Ribosomal_uL15/eL18_sf"/>
</dbReference>
<dbReference type="InterPro" id="IPR005749">
    <property type="entry name" value="Ribosomal_uL15_bac-type"/>
</dbReference>
<dbReference type="InterPro" id="IPR001196">
    <property type="entry name" value="Ribosomal_uL15_CS"/>
</dbReference>
<dbReference type="NCBIfam" id="TIGR01071">
    <property type="entry name" value="rplO_bact"/>
    <property type="match status" value="1"/>
</dbReference>
<dbReference type="PANTHER" id="PTHR12934">
    <property type="entry name" value="50S RIBOSOMAL PROTEIN L15"/>
    <property type="match status" value="1"/>
</dbReference>
<dbReference type="PANTHER" id="PTHR12934:SF11">
    <property type="entry name" value="LARGE RIBOSOMAL SUBUNIT PROTEIN UL15M"/>
    <property type="match status" value="1"/>
</dbReference>
<dbReference type="Pfam" id="PF00828">
    <property type="entry name" value="Ribosomal_L27A"/>
    <property type="match status" value="1"/>
</dbReference>
<dbReference type="SUPFAM" id="SSF52080">
    <property type="entry name" value="Ribosomal proteins L15p and L18e"/>
    <property type="match status" value="1"/>
</dbReference>
<dbReference type="PROSITE" id="PS00475">
    <property type="entry name" value="RIBOSOMAL_L15"/>
    <property type="match status" value="1"/>
</dbReference>
<sequence length="182" mass="19890">MDLSSLRPAKGAVKNKKRIGRGPGSGNGTTAGKGNKGQQSRSGYTRPVSEGGQMPIYRRLPKFGFTKPNRKNVIPVNLSQIALWMENGKATSEITVENLKSLCSARRADYFKILGNGELKSPVTITAHFVSKSAQEKILQAGGTITLAERTLLEAERIKDTPVEEGLMKPKARLRKKKKIKS</sequence>
<accession>B3EP42</accession>
<keyword id="KW-0687">Ribonucleoprotein</keyword>
<keyword id="KW-0689">Ribosomal protein</keyword>
<keyword id="KW-0694">RNA-binding</keyword>
<keyword id="KW-0699">rRNA-binding</keyword>
<protein>
    <recommendedName>
        <fullName evidence="1">Large ribosomal subunit protein uL15</fullName>
    </recommendedName>
    <alternativeName>
        <fullName evidence="3">50S ribosomal protein L15</fullName>
    </alternativeName>
</protein>
<gene>
    <name evidence="1" type="primary">rplO</name>
    <name type="ordered locus">Cphamn1_2277</name>
</gene>
<reference key="1">
    <citation type="submission" date="2008-06" db="EMBL/GenBank/DDBJ databases">
        <title>Complete sequence of Chlorobium phaeobacteroides BS1.</title>
        <authorList>
            <consortium name="US DOE Joint Genome Institute"/>
            <person name="Lucas S."/>
            <person name="Copeland A."/>
            <person name="Lapidus A."/>
            <person name="Glavina del Rio T."/>
            <person name="Dalin E."/>
            <person name="Tice H."/>
            <person name="Bruce D."/>
            <person name="Goodwin L."/>
            <person name="Pitluck S."/>
            <person name="Schmutz J."/>
            <person name="Larimer F."/>
            <person name="Land M."/>
            <person name="Hauser L."/>
            <person name="Kyrpides N."/>
            <person name="Ovchinnikova G."/>
            <person name="Li T."/>
            <person name="Liu Z."/>
            <person name="Zhao F."/>
            <person name="Overmann J."/>
            <person name="Bryant D.A."/>
            <person name="Richardson P."/>
        </authorList>
    </citation>
    <scope>NUCLEOTIDE SEQUENCE [LARGE SCALE GENOMIC DNA]</scope>
    <source>
        <strain>BS1</strain>
    </source>
</reference>
<proteinExistence type="inferred from homology"/>
<feature type="chain" id="PRO_1000142790" description="Large ribosomal subunit protein uL15">
    <location>
        <begin position="1"/>
        <end position="182"/>
    </location>
</feature>
<feature type="region of interest" description="Disordered" evidence="2">
    <location>
        <begin position="1"/>
        <end position="52"/>
    </location>
</feature>
<feature type="compositionally biased region" description="Gly residues" evidence="2">
    <location>
        <begin position="21"/>
        <end position="35"/>
    </location>
</feature>
<name>RL15_CHLPB</name>
<organism>
    <name type="scientific">Chlorobium phaeobacteroides (strain BS1)</name>
    <dbReference type="NCBI Taxonomy" id="331678"/>
    <lineage>
        <taxon>Bacteria</taxon>
        <taxon>Pseudomonadati</taxon>
        <taxon>Chlorobiota</taxon>
        <taxon>Chlorobiia</taxon>
        <taxon>Chlorobiales</taxon>
        <taxon>Chlorobiaceae</taxon>
        <taxon>Chlorobium/Pelodictyon group</taxon>
        <taxon>Chlorobium</taxon>
    </lineage>
</organism>
<evidence type="ECO:0000255" key="1">
    <source>
        <dbReference type="HAMAP-Rule" id="MF_01341"/>
    </source>
</evidence>
<evidence type="ECO:0000256" key="2">
    <source>
        <dbReference type="SAM" id="MobiDB-lite"/>
    </source>
</evidence>
<evidence type="ECO:0000305" key="3"/>